<evidence type="ECO:0000250" key="1"/>
<evidence type="ECO:0000256" key="2">
    <source>
        <dbReference type="SAM" id="MobiDB-lite"/>
    </source>
</evidence>
<evidence type="ECO:0000269" key="3">
    <source>
    </source>
</evidence>
<evidence type="ECO:0000305" key="4"/>
<gene>
    <name type="primary">NSE4B</name>
    <name type="ordered locus">At3g20760</name>
    <name type="ORF">MOE17.7</name>
</gene>
<organism>
    <name type="scientific">Arabidopsis thaliana</name>
    <name type="common">Mouse-ear cress</name>
    <dbReference type="NCBI Taxonomy" id="3702"/>
    <lineage>
        <taxon>Eukaryota</taxon>
        <taxon>Viridiplantae</taxon>
        <taxon>Streptophyta</taxon>
        <taxon>Embryophyta</taxon>
        <taxon>Tracheophyta</taxon>
        <taxon>Spermatophyta</taxon>
        <taxon>Magnoliopsida</taxon>
        <taxon>eudicotyledons</taxon>
        <taxon>Gunneridae</taxon>
        <taxon>Pentapetalae</taxon>
        <taxon>rosids</taxon>
        <taxon>malvids</taxon>
        <taxon>Brassicales</taxon>
        <taxon>Brassicaceae</taxon>
        <taxon>Camelineae</taxon>
        <taxon>Arabidopsis</taxon>
    </lineage>
</organism>
<protein>
    <recommendedName>
        <fullName>Non-structural maintenance of chromosomes element 4 homolog B</fullName>
        <shortName>Non-SMC element 4 homolog B</shortName>
    </recommendedName>
</protein>
<dbReference type="EMBL" id="AB025629">
    <property type="protein sequence ID" value="BAB02484.1"/>
    <property type="status" value="ALT_SEQ"/>
    <property type="molecule type" value="Genomic_DNA"/>
</dbReference>
<dbReference type="EMBL" id="CP002686">
    <property type="protein sequence ID" value="AEE76420.1"/>
    <property type="molecule type" value="Genomic_DNA"/>
</dbReference>
<dbReference type="RefSeq" id="NP_188712.4">
    <property type="nucleotide sequence ID" value="NM_112967.4"/>
</dbReference>
<dbReference type="FunCoup" id="F4JET1">
    <property type="interactions" value="2465"/>
</dbReference>
<dbReference type="STRING" id="3702.F4JET1"/>
<dbReference type="iPTMnet" id="F4JET1"/>
<dbReference type="PaxDb" id="3702-AT3G20760.1"/>
<dbReference type="ProteomicsDB" id="249127"/>
<dbReference type="EnsemblPlants" id="AT3G20760.1">
    <property type="protein sequence ID" value="AT3G20760.1"/>
    <property type="gene ID" value="AT3G20760"/>
</dbReference>
<dbReference type="GeneID" id="821624"/>
<dbReference type="Gramene" id="AT3G20760.1">
    <property type="protein sequence ID" value="AT3G20760.1"/>
    <property type="gene ID" value="AT3G20760"/>
</dbReference>
<dbReference type="KEGG" id="ath:AT3G20760"/>
<dbReference type="Araport" id="AT3G20760"/>
<dbReference type="TAIR" id="AT3G20760">
    <property type="gene designation" value="NSE4B"/>
</dbReference>
<dbReference type="eggNOG" id="KOG2866">
    <property type="taxonomic scope" value="Eukaryota"/>
</dbReference>
<dbReference type="HOGENOM" id="CLU_041037_0_0_1"/>
<dbReference type="InParanoid" id="F4JET1"/>
<dbReference type="OMA" id="GLNWMED"/>
<dbReference type="PRO" id="PR:F4JET1"/>
<dbReference type="Proteomes" id="UP000006548">
    <property type="component" value="Chromosome 3"/>
</dbReference>
<dbReference type="ExpressionAtlas" id="F4JET1">
    <property type="expression patterns" value="baseline and differential"/>
</dbReference>
<dbReference type="GO" id="GO:0005634">
    <property type="term" value="C:nucleus"/>
    <property type="evidence" value="ECO:0007669"/>
    <property type="project" value="UniProtKB-SubCell"/>
</dbReference>
<dbReference type="GO" id="GO:0030915">
    <property type="term" value="C:Smc5-Smc6 complex"/>
    <property type="evidence" value="ECO:0007669"/>
    <property type="project" value="InterPro"/>
</dbReference>
<dbReference type="GO" id="GO:0006310">
    <property type="term" value="P:DNA recombination"/>
    <property type="evidence" value="ECO:0007669"/>
    <property type="project" value="UniProtKB-KW"/>
</dbReference>
<dbReference type="GO" id="GO:0006281">
    <property type="term" value="P:DNA repair"/>
    <property type="evidence" value="ECO:0007669"/>
    <property type="project" value="UniProtKB-KW"/>
</dbReference>
<dbReference type="InterPro" id="IPR027786">
    <property type="entry name" value="Nse4/EID"/>
</dbReference>
<dbReference type="InterPro" id="IPR014854">
    <property type="entry name" value="Nse4_C"/>
</dbReference>
<dbReference type="PANTHER" id="PTHR16140">
    <property type="entry name" value="NON-STRUCTURAL MAINTENANCE OF CHROMOSOMES ELEMENT 4"/>
    <property type="match status" value="1"/>
</dbReference>
<dbReference type="PANTHER" id="PTHR16140:SF0">
    <property type="entry name" value="NON-STRUCTURAL MAINTENANCE OF CHROMOSOMES ELEMENT 4"/>
    <property type="match status" value="1"/>
</dbReference>
<dbReference type="Pfam" id="PF08743">
    <property type="entry name" value="Nse4_C"/>
    <property type="match status" value="1"/>
</dbReference>
<feature type="chain" id="PRO_0000424410" description="Non-structural maintenance of chromosomes element 4 homolog B">
    <location>
        <begin position="1"/>
        <end position="383"/>
    </location>
</feature>
<feature type="region of interest" description="Disordered" evidence="2">
    <location>
        <begin position="1"/>
        <end position="59"/>
    </location>
</feature>
<feature type="region of interest" description="Disordered" evidence="2">
    <location>
        <begin position="198"/>
        <end position="231"/>
    </location>
</feature>
<feature type="region of interest" description="Disordered" evidence="2">
    <location>
        <begin position="355"/>
        <end position="383"/>
    </location>
</feature>
<feature type="compositionally biased region" description="Basic and acidic residues" evidence="2">
    <location>
        <begin position="1"/>
        <end position="22"/>
    </location>
</feature>
<feature type="compositionally biased region" description="Basic residues" evidence="2">
    <location>
        <begin position="201"/>
        <end position="212"/>
    </location>
</feature>
<feature type="compositionally biased region" description="Polar residues" evidence="2">
    <location>
        <begin position="355"/>
        <end position="372"/>
    </location>
</feature>
<accession>F4JET1</accession>
<accession>Q9LT44</accession>
<keyword id="KW-0227">DNA damage</keyword>
<keyword id="KW-0233">DNA recombination</keyword>
<keyword id="KW-0234">DNA repair</keyword>
<keyword id="KW-0539">Nucleus</keyword>
<keyword id="KW-1185">Reference proteome</keyword>
<comment type="function">
    <text evidence="1">Component of the SMC5-SMC6 complex, that promotes sister chromatid alignment after DNA damage and facilitates double-stranded DNA breaks (DSBs) repair via homologous recombination between sister chromatids.</text>
</comment>
<comment type="subunit">
    <text evidence="1">Interacts with SMC5, SMC6A or SMC6B. The SMC5-SMC6 complex is composed of the SMC5 and SMC6 heterodimer attached via their hinge domain and from the non-SMC subunit NSE4A or NSE4B (By similarity).</text>
</comment>
<comment type="subcellular location">
    <subcellularLocation>
        <location evidence="1">Nucleus</location>
    </subcellularLocation>
</comment>
<comment type="tissue specificity">
    <text evidence="3">Not expressed in seedlings, rosette leaves and floral buds.</text>
</comment>
<comment type="similarity">
    <text evidence="4">Belongs to the NSE4 family.</text>
</comment>
<comment type="sequence caution" evidence="4">
    <conflict type="erroneous gene model prediction">
        <sequence resource="EMBL-CDS" id="BAB02484"/>
    </conflict>
</comment>
<proteinExistence type="evidence at transcript level"/>
<sequence>MRNSVKWETELTGDRSRRREADESSETPKIVKKEKRSKTVIASLRPQQPPIQEEEEQGIADRRAIRSQYLALTHKIKDAKDDLTKIDSNKFNSIINEVENLHQKVRKPREQIADAEALLDLTNSVVSSVKSQSAHGGVSPAEFVNALINGFGKTSLRIDADENTQVSMKWKDLGFTVCSTVLVSCGCTTMMGPMYSEMKQRKSRVGNRKRTKPGAGVKPEEVDDTEAEKKSDTDNNMAVMFNILRKNKRVKIENLVLNRKSFAQTAENMFALSFLVKDGRVEITVDNNGSHFVEPRNAPAANLVLSGEVAYNHFVLRFDYKDWEPMSKMVAVGEELMPLRETKVAQDSIELSRKQGSVIQEETVVEDSSNMEGDNEDSKNGGL</sequence>
<name>NSE4B_ARATH</name>
<reference key="1">
    <citation type="journal article" date="2000" name="DNA Res.">
        <title>Structural analysis of Arabidopsis thaliana chromosome 3. I. Sequence features of the regions of 4,504,864 bp covered by sixty P1 and TAC clones.</title>
        <authorList>
            <person name="Sato S."/>
            <person name="Nakamura Y."/>
            <person name="Kaneko T."/>
            <person name="Katoh T."/>
            <person name="Asamizu E."/>
            <person name="Tabata S."/>
        </authorList>
    </citation>
    <scope>NUCLEOTIDE SEQUENCE [LARGE SCALE GENOMIC DNA]</scope>
    <source>
        <strain>cv. Columbia</strain>
    </source>
</reference>
<reference key="2">
    <citation type="journal article" date="2017" name="Plant J.">
        <title>Araport11: a complete reannotation of the Arabidopsis thaliana reference genome.</title>
        <authorList>
            <person name="Cheng C.Y."/>
            <person name="Krishnakumar V."/>
            <person name="Chan A.P."/>
            <person name="Thibaud-Nissen F."/>
            <person name="Schobel S."/>
            <person name="Town C.D."/>
        </authorList>
    </citation>
    <scope>GENOME REANNOTATION</scope>
    <source>
        <strain>cv. Columbia</strain>
    </source>
</reference>
<reference key="3">
    <citation type="journal article" date="2009" name="Plant Cell">
        <title>The STRUCTURAL MAINTENANCE OF CHROMOSOMES 5/6 complex promotes sister chromatid alignment and homologous recombination after DNA damage in Arabidopsis thaliana.</title>
        <authorList>
            <person name="Watanabe K."/>
            <person name="Pacher M."/>
            <person name="Dukowic S."/>
            <person name="Schubert V."/>
            <person name="Puchta H."/>
            <person name="Schubert I."/>
        </authorList>
    </citation>
    <scope>TISSUE SPECIFICITY</scope>
</reference>